<name>DEOB_BACC4</name>
<sequence>MNKYKRIFLVVMDSVGIGEAPDAEQFGDLGSDTIGHIAEHMNGLQMPNMVKLGLGNIREMKGISKVEKPLGYYTKMQEKSTGKDTMTGHWEIMGLYIDTPFQVFPEGFPKELLDELEEKTGRKIIGNKPASGTEILDELGQEQMETGSLIVYTSADSVLQIAAHEEVVPLDELYKICKIARELTLDEKYMVGRVIARPFVGEPGNFTRTPNRHDYALKPFGRTVMNELKDSDYDVIAIGKISDIYDGEGVTESLRTKSNMDGMDKLVDTLNMDFTGLSFLNLVDFDALFGHRRDPQGYGEALQEYDARLPEVFAKLKEDDLLLITADHGNDPIHPGTDHTREYVPLLAYSPSMKEGGQELPLRQTFADIGATVAENFGVKMPEYGTSFLNELKK</sequence>
<reference key="1">
    <citation type="submission" date="2008-10" db="EMBL/GenBank/DDBJ databases">
        <title>Genome sequence of Bacillus cereus B4264.</title>
        <authorList>
            <person name="Dodson R.J."/>
            <person name="Durkin A.S."/>
            <person name="Rosovitz M.J."/>
            <person name="Rasko D.A."/>
            <person name="Hoffmaster A."/>
            <person name="Ravel J."/>
            <person name="Sutton G."/>
        </authorList>
    </citation>
    <scope>NUCLEOTIDE SEQUENCE [LARGE SCALE GENOMIC DNA]</scope>
    <source>
        <strain>B4264</strain>
    </source>
</reference>
<dbReference type="EC" id="5.4.2.7" evidence="1"/>
<dbReference type="EMBL" id="CP001176">
    <property type="protein sequence ID" value="ACK63903.1"/>
    <property type="molecule type" value="Genomic_DNA"/>
</dbReference>
<dbReference type="RefSeq" id="WP_001046079.1">
    <property type="nucleotide sequence ID" value="NZ_VEHB01000002.1"/>
</dbReference>
<dbReference type="SMR" id="B7H979"/>
<dbReference type="GeneID" id="93007016"/>
<dbReference type="KEGG" id="bcb:BCB4264_A4197"/>
<dbReference type="HOGENOM" id="CLU_053861_0_0_9"/>
<dbReference type="UniPathway" id="UPA00002">
    <property type="reaction ID" value="UER00467"/>
</dbReference>
<dbReference type="Proteomes" id="UP000007096">
    <property type="component" value="Chromosome"/>
</dbReference>
<dbReference type="GO" id="GO:0005829">
    <property type="term" value="C:cytosol"/>
    <property type="evidence" value="ECO:0007669"/>
    <property type="project" value="TreeGrafter"/>
</dbReference>
<dbReference type="GO" id="GO:0000287">
    <property type="term" value="F:magnesium ion binding"/>
    <property type="evidence" value="ECO:0007669"/>
    <property type="project" value="InterPro"/>
</dbReference>
<dbReference type="GO" id="GO:0030145">
    <property type="term" value="F:manganese ion binding"/>
    <property type="evidence" value="ECO:0007669"/>
    <property type="project" value="UniProtKB-UniRule"/>
</dbReference>
<dbReference type="GO" id="GO:0008973">
    <property type="term" value="F:phosphopentomutase activity"/>
    <property type="evidence" value="ECO:0007669"/>
    <property type="project" value="UniProtKB-UniRule"/>
</dbReference>
<dbReference type="GO" id="GO:0006018">
    <property type="term" value="P:2-deoxyribose 1-phosphate catabolic process"/>
    <property type="evidence" value="ECO:0007669"/>
    <property type="project" value="UniProtKB-UniRule"/>
</dbReference>
<dbReference type="GO" id="GO:0006015">
    <property type="term" value="P:5-phosphoribose 1-diphosphate biosynthetic process"/>
    <property type="evidence" value="ECO:0007669"/>
    <property type="project" value="UniProtKB-UniPathway"/>
</dbReference>
<dbReference type="GO" id="GO:0043094">
    <property type="term" value="P:metabolic compound salvage"/>
    <property type="evidence" value="ECO:0007669"/>
    <property type="project" value="InterPro"/>
</dbReference>
<dbReference type="GO" id="GO:0009117">
    <property type="term" value="P:nucleotide metabolic process"/>
    <property type="evidence" value="ECO:0007669"/>
    <property type="project" value="InterPro"/>
</dbReference>
<dbReference type="CDD" id="cd16009">
    <property type="entry name" value="PPM"/>
    <property type="match status" value="1"/>
</dbReference>
<dbReference type="FunFam" id="3.30.70.1250:FF:000001">
    <property type="entry name" value="Phosphopentomutase"/>
    <property type="match status" value="1"/>
</dbReference>
<dbReference type="Gene3D" id="3.40.720.10">
    <property type="entry name" value="Alkaline Phosphatase, subunit A"/>
    <property type="match status" value="1"/>
</dbReference>
<dbReference type="Gene3D" id="3.30.70.1250">
    <property type="entry name" value="Phosphopentomutase"/>
    <property type="match status" value="1"/>
</dbReference>
<dbReference type="HAMAP" id="MF_00740">
    <property type="entry name" value="Phosphopentomut"/>
    <property type="match status" value="1"/>
</dbReference>
<dbReference type="InterPro" id="IPR017850">
    <property type="entry name" value="Alkaline_phosphatase_core_sf"/>
</dbReference>
<dbReference type="InterPro" id="IPR010045">
    <property type="entry name" value="DeoB"/>
</dbReference>
<dbReference type="InterPro" id="IPR006124">
    <property type="entry name" value="Metalloenzyme"/>
</dbReference>
<dbReference type="InterPro" id="IPR024052">
    <property type="entry name" value="Phosphopentomutase_DeoB_cap_sf"/>
</dbReference>
<dbReference type="NCBIfam" id="TIGR01696">
    <property type="entry name" value="deoB"/>
    <property type="match status" value="1"/>
</dbReference>
<dbReference type="NCBIfam" id="NF003766">
    <property type="entry name" value="PRK05362.1"/>
    <property type="match status" value="1"/>
</dbReference>
<dbReference type="PANTHER" id="PTHR21110">
    <property type="entry name" value="PHOSPHOPENTOMUTASE"/>
    <property type="match status" value="1"/>
</dbReference>
<dbReference type="PANTHER" id="PTHR21110:SF0">
    <property type="entry name" value="PHOSPHOPENTOMUTASE"/>
    <property type="match status" value="1"/>
</dbReference>
<dbReference type="Pfam" id="PF01676">
    <property type="entry name" value="Metalloenzyme"/>
    <property type="match status" value="1"/>
</dbReference>
<dbReference type="PIRSF" id="PIRSF001491">
    <property type="entry name" value="Ppentomutase"/>
    <property type="match status" value="1"/>
</dbReference>
<dbReference type="SUPFAM" id="SSF53649">
    <property type="entry name" value="Alkaline phosphatase-like"/>
    <property type="match status" value="1"/>
</dbReference>
<dbReference type="SUPFAM" id="SSF143856">
    <property type="entry name" value="DeoB insert domain-like"/>
    <property type="match status" value="1"/>
</dbReference>
<proteinExistence type="inferred from homology"/>
<gene>
    <name evidence="1" type="primary">deoB</name>
    <name type="ordered locus">BCB4264_A4197</name>
</gene>
<protein>
    <recommendedName>
        <fullName evidence="1">Phosphopentomutase</fullName>
        <ecNumber evidence="1">5.4.2.7</ecNumber>
    </recommendedName>
    <alternativeName>
        <fullName evidence="1">Phosphodeoxyribomutase</fullName>
    </alternativeName>
</protein>
<accession>B7H979</accession>
<evidence type="ECO:0000255" key="1">
    <source>
        <dbReference type="HAMAP-Rule" id="MF_00740"/>
    </source>
</evidence>
<comment type="function">
    <text evidence="1">Isomerase that catalyzes the conversion of deoxy-ribose 1-phosphate (dRib-1-P) and ribose 1-phosphate (Rib-1-P) to deoxy-ribose 5-phosphate (dRib-5-P) and ribose 5-phosphate (Rib-5-P), respectively.</text>
</comment>
<comment type="catalytic activity">
    <reaction evidence="1">
        <text>2-deoxy-alpha-D-ribose 1-phosphate = 2-deoxy-D-ribose 5-phosphate</text>
        <dbReference type="Rhea" id="RHEA:27658"/>
        <dbReference type="ChEBI" id="CHEBI:57259"/>
        <dbReference type="ChEBI" id="CHEBI:62877"/>
        <dbReference type="EC" id="5.4.2.7"/>
    </reaction>
</comment>
<comment type="catalytic activity">
    <reaction evidence="1">
        <text>alpha-D-ribose 1-phosphate = D-ribose 5-phosphate</text>
        <dbReference type="Rhea" id="RHEA:18793"/>
        <dbReference type="ChEBI" id="CHEBI:57720"/>
        <dbReference type="ChEBI" id="CHEBI:78346"/>
        <dbReference type="EC" id="5.4.2.7"/>
    </reaction>
</comment>
<comment type="cofactor">
    <cofactor evidence="1">
        <name>Mn(2+)</name>
        <dbReference type="ChEBI" id="CHEBI:29035"/>
    </cofactor>
    <text evidence="1">Binds 2 manganese ions.</text>
</comment>
<comment type="pathway">
    <text evidence="1">Carbohydrate degradation; 2-deoxy-D-ribose 1-phosphate degradation; D-glyceraldehyde 3-phosphate and acetaldehyde from 2-deoxy-alpha-D-ribose 1-phosphate: step 1/2.</text>
</comment>
<comment type="subcellular location">
    <subcellularLocation>
        <location evidence="1">Cytoplasm</location>
    </subcellularLocation>
</comment>
<comment type="similarity">
    <text evidence="1">Belongs to the phosphopentomutase family.</text>
</comment>
<keyword id="KW-0963">Cytoplasm</keyword>
<keyword id="KW-0413">Isomerase</keyword>
<keyword id="KW-0464">Manganese</keyword>
<keyword id="KW-0479">Metal-binding</keyword>
<organism>
    <name type="scientific">Bacillus cereus (strain B4264)</name>
    <dbReference type="NCBI Taxonomy" id="405532"/>
    <lineage>
        <taxon>Bacteria</taxon>
        <taxon>Bacillati</taxon>
        <taxon>Bacillota</taxon>
        <taxon>Bacilli</taxon>
        <taxon>Bacillales</taxon>
        <taxon>Bacillaceae</taxon>
        <taxon>Bacillus</taxon>
        <taxon>Bacillus cereus group</taxon>
    </lineage>
</organism>
<feature type="chain" id="PRO_1000133061" description="Phosphopentomutase">
    <location>
        <begin position="1"/>
        <end position="394"/>
    </location>
</feature>
<feature type="binding site" evidence="1">
    <location>
        <position position="13"/>
    </location>
    <ligand>
        <name>Mn(2+)</name>
        <dbReference type="ChEBI" id="CHEBI:29035"/>
        <label>1</label>
    </ligand>
</feature>
<feature type="binding site" evidence="1">
    <location>
        <position position="286"/>
    </location>
    <ligand>
        <name>Mn(2+)</name>
        <dbReference type="ChEBI" id="CHEBI:29035"/>
        <label>2</label>
    </ligand>
</feature>
<feature type="binding site" evidence="1">
    <location>
        <position position="291"/>
    </location>
    <ligand>
        <name>Mn(2+)</name>
        <dbReference type="ChEBI" id="CHEBI:29035"/>
        <label>2</label>
    </ligand>
</feature>
<feature type="binding site" evidence="1">
    <location>
        <position position="327"/>
    </location>
    <ligand>
        <name>Mn(2+)</name>
        <dbReference type="ChEBI" id="CHEBI:29035"/>
        <label>1</label>
    </ligand>
</feature>
<feature type="binding site" evidence="1">
    <location>
        <position position="328"/>
    </location>
    <ligand>
        <name>Mn(2+)</name>
        <dbReference type="ChEBI" id="CHEBI:29035"/>
        <label>1</label>
    </ligand>
</feature>
<feature type="binding site" evidence="1">
    <location>
        <position position="339"/>
    </location>
    <ligand>
        <name>Mn(2+)</name>
        <dbReference type="ChEBI" id="CHEBI:29035"/>
        <label>2</label>
    </ligand>
</feature>